<evidence type="ECO:0000255" key="1"/>
<evidence type="ECO:0000269" key="2">
    <source>
    </source>
</evidence>
<evidence type="ECO:0000303" key="3">
    <source>
    </source>
</evidence>
<evidence type="ECO:0000305" key="4">
    <source>
    </source>
</evidence>
<evidence type="ECO:0000312" key="5">
    <source>
        <dbReference type="EMBL" id="AMT92374.1"/>
    </source>
</evidence>
<reference evidence="5" key="1">
    <citation type="journal article" date="2016" name="PLoS ONE">
        <title>Novel Antimicrobial Peptides EeCentrocins 1, 2 and EeStrongylocin 2 from the Edible Sea Urchin Echinus esculentus Have 6-Br-Trp Post-Translational Modifications.</title>
        <authorList>
            <person name="Solstad R.G."/>
            <person name="Li C."/>
            <person name="Isaksson J."/>
            <person name="Johansen J."/>
            <person name="Svenson J."/>
            <person name="Stensvag K."/>
            <person name="Haug T."/>
        </authorList>
    </citation>
    <scope>NUCLEOTIDE SEQUENCE [MRNA]</scope>
    <scope>PROTEIN SEQUENCE OF 51-80 AND 105-117</scope>
    <scope>FUNCTION</scope>
    <scope>MASS SPECTROMETRY</scope>
    <scope>BROMINATION AT TRP-52 AND TRP-53</scope>
    <scope>AMIDATION AT ASN-117</scope>
    <source>
        <tissue evidence="3">Coelomocyte</tissue>
    </source>
</reference>
<proteinExistence type="evidence at protein level"/>
<keyword id="KW-0027">Amidation</keyword>
<keyword id="KW-0044">Antibiotic</keyword>
<keyword id="KW-0929">Antimicrobial</keyword>
<keyword id="KW-0102">Bromination</keyword>
<keyword id="KW-0903">Direct protein sequencing</keyword>
<keyword id="KW-1015">Disulfide bond</keyword>
<keyword id="KW-0295">Fungicide</keyword>
<keyword id="KW-0732">Signal</keyword>
<name>CTCN1_ECHES</name>
<sequence>MMIKIAVVLCAVMATTMVRAKYVEEQELADLLDLLISEEVSSPDDAVALQGWWRRTVDKVRNAGRKVAGFASKACGALGHSPQEARAKVLEAFPEMKEADLDEEDIGKYCGYAHALNGR</sequence>
<feature type="signal peptide" evidence="1">
    <location>
        <begin position="1"/>
        <end position="20"/>
    </location>
</feature>
<feature type="propeptide" id="PRO_0000438838" evidence="4">
    <location>
        <begin position="21"/>
        <end position="50"/>
    </location>
</feature>
<feature type="peptide" id="PRO_0000438839" description="Centrocin 1, heavy chain" evidence="2">
    <location>
        <begin position="51"/>
        <end position="80"/>
    </location>
</feature>
<feature type="propeptide" id="PRO_0000438840" evidence="2">
    <location>
        <begin position="81"/>
        <end position="104"/>
    </location>
</feature>
<feature type="peptide" id="PRO_0000438841" description="Centrocin 1, light chain" evidence="2">
    <location>
        <begin position="105"/>
        <end position="117"/>
    </location>
</feature>
<feature type="modified residue" description="6'-bromotryptophan" evidence="2">
    <location>
        <position position="52"/>
    </location>
</feature>
<feature type="modified residue" description="6'-bromotryptophan" evidence="2">
    <location>
        <position position="53"/>
    </location>
</feature>
<feature type="modified residue" description="Asparagine amide" evidence="2">
    <location>
        <position position="117"/>
    </location>
</feature>
<feature type="disulfide bond" evidence="3">
    <location>
        <begin position="75"/>
        <end position="110"/>
    </location>
</feature>
<protein>
    <recommendedName>
        <fullName evidence="5">Centrocin 1</fullName>
    </recommendedName>
    <alternativeName>
        <fullName evidence="3">EeCentrocin 1</fullName>
    </alternativeName>
    <component>
        <recommendedName>
            <fullName evidence="3">Centrocin 1, heavy chain</fullName>
        </recommendedName>
    </component>
    <component>
        <recommendedName>
            <fullName evidence="3">Centrocin 1, light chain</fullName>
        </recommendedName>
    </component>
</protein>
<dbReference type="EMBL" id="KR494262">
    <property type="protein sequence ID" value="AMT92374.1"/>
    <property type="molecule type" value="mRNA"/>
</dbReference>
<dbReference type="GO" id="GO:0050832">
    <property type="term" value="P:defense response to fungus"/>
    <property type="evidence" value="ECO:0000314"/>
    <property type="project" value="UniProtKB"/>
</dbReference>
<dbReference type="GO" id="GO:0050829">
    <property type="term" value="P:defense response to Gram-negative bacterium"/>
    <property type="evidence" value="ECO:0000314"/>
    <property type="project" value="UniProtKB"/>
</dbReference>
<dbReference type="GO" id="GO:0050830">
    <property type="term" value="P:defense response to Gram-positive bacterium"/>
    <property type="evidence" value="ECO:0000314"/>
    <property type="project" value="UniProtKB"/>
</dbReference>
<dbReference type="GO" id="GO:0031640">
    <property type="term" value="P:killing of cells of another organism"/>
    <property type="evidence" value="ECO:0007669"/>
    <property type="project" value="UniProtKB-KW"/>
</dbReference>
<organism evidence="5">
    <name type="scientific">Echinus esculentus</name>
    <name type="common">Sea urchin</name>
    <dbReference type="NCBI Taxonomy" id="7648"/>
    <lineage>
        <taxon>Eukaryota</taxon>
        <taxon>Metazoa</taxon>
        <taxon>Echinodermata</taxon>
        <taxon>Eleutherozoa</taxon>
        <taxon>Echinozoa</taxon>
        <taxon>Echinoidea</taxon>
        <taxon>Euechinoidea</taxon>
        <taxon>Echinacea</taxon>
        <taxon>Camarodonta</taxon>
        <taxon>Echinidea</taxon>
        <taxon>Echinidae</taxon>
        <taxon>Echinus</taxon>
    </lineage>
</organism>
<accession>A0A144LUY5</accession>
<comment type="function">
    <molecule>Centrocin 1, heavy chain</molecule>
    <text evidence="2">Has antimicrobial activity against Gram-negative bacteria, Gram-positive bacteria and against fungi with minimum inhibitory concentration (MIC) between 0.78 uM and 50 uM. Shows little hemolytic activity even at a concentration of 100 uM.</text>
</comment>
<comment type="function">
    <molecule>Centrocin 1, light chain</molecule>
    <text evidence="2">Has no antimicrobial activity. Shows no hemolytic activity.</text>
</comment>
<comment type="subunit">
    <text evidence="2">Heterodimer of a light and a heavy chain, probably disulfide-linked.</text>
</comment>
<comment type="mass spectrometry">
    <text>The measured ranges are 51-80, 105-117.</text>
</comment>